<organism>
    <name type="scientific">Arthrobacter sp. (strain FB24)</name>
    <dbReference type="NCBI Taxonomy" id="290399"/>
    <lineage>
        <taxon>Bacteria</taxon>
        <taxon>Bacillati</taxon>
        <taxon>Actinomycetota</taxon>
        <taxon>Actinomycetes</taxon>
        <taxon>Micrococcales</taxon>
        <taxon>Micrococcaceae</taxon>
        <taxon>Arthrobacter</taxon>
    </lineage>
</organism>
<evidence type="ECO:0000255" key="1">
    <source>
        <dbReference type="HAMAP-Rule" id="MF_00001"/>
    </source>
</evidence>
<name>PYRB_ARTS2</name>
<reference key="1">
    <citation type="journal article" date="2013" name="Stand. Genomic Sci.">
        <title>Complete genome sequence of Arthrobacter sp. strain FB24.</title>
        <authorList>
            <person name="Nakatsu C.H."/>
            <person name="Barabote R."/>
            <person name="Thompson S."/>
            <person name="Bruce D."/>
            <person name="Detter C."/>
            <person name="Brettin T."/>
            <person name="Han C."/>
            <person name="Beasley F."/>
            <person name="Chen W."/>
            <person name="Konopka A."/>
            <person name="Xie G."/>
        </authorList>
    </citation>
    <scope>NUCLEOTIDE SEQUENCE [LARGE SCALE GENOMIC DNA]</scope>
    <source>
        <strain>FB24</strain>
    </source>
</reference>
<sequence>MKHLLSTEDLSLANAIRILDTAEEMAAVGDREVKKLPALRGRTVVNLFFEDSTRTRISFEAAAKRLSADVINFAAKGSSVSKGESLKDTAQTLAAMGADAVVIRHWASGAPHRLAATDWIDAAVINAGDGTHEHPTQALLDAFTMRRHWARLHGTPSAGADLKGMRVAIAGDVLHSRVARSNVWLLRTLGAEVTLVAPPTLLPIGVGQWPCSVSYDMDETLAKGVDAVVMLRVQGERMNASFFPTTREYSRRWGFDDNRLRALDSLGLKDTIIMHPGPMNRGLEISSAAADSPRSTVLAQVRNGVSVRMAALYLLLSGDTREPALTPNAAYSTKESH</sequence>
<dbReference type="EC" id="2.1.3.2" evidence="1"/>
<dbReference type="EMBL" id="CP000454">
    <property type="protein sequence ID" value="ABK03646.1"/>
    <property type="molecule type" value="Genomic_DNA"/>
</dbReference>
<dbReference type="RefSeq" id="WP_011692110.1">
    <property type="nucleotide sequence ID" value="NC_008541.1"/>
</dbReference>
<dbReference type="SMR" id="A0JX76"/>
<dbReference type="STRING" id="290399.Arth_2266"/>
<dbReference type="KEGG" id="art:Arth_2266"/>
<dbReference type="eggNOG" id="COG0540">
    <property type="taxonomic scope" value="Bacteria"/>
</dbReference>
<dbReference type="HOGENOM" id="CLU_043846_2_0_11"/>
<dbReference type="OrthoDB" id="9774690at2"/>
<dbReference type="UniPathway" id="UPA00070">
    <property type="reaction ID" value="UER00116"/>
</dbReference>
<dbReference type="Proteomes" id="UP000000754">
    <property type="component" value="Chromosome"/>
</dbReference>
<dbReference type="GO" id="GO:0005829">
    <property type="term" value="C:cytosol"/>
    <property type="evidence" value="ECO:0007669"/>
    <property type="project" value="TreeGrafter"/>
</dbReference>
<dbReference type="GO" id="GO:0016597">
    <property type="term" value="F:amino acid binding"/>
    <property type="evidence" value="ECO:0007669"/>
    <property type="project" value="InterPro"/>
</dbReference>
<dbReference type="GO" id="GO:0004070">
    <property type="term" value="F:aspartate carbamoyltransferase activity"/>
    <property type="evidence" value="ECO:0007669"/>
    <property type="project" value="UniProtKB-UniRule"/>
</dbReference>
<dbReference type="GO" id="GO:0006207">
    <property type="term" value="P:'de novo' pyrimidine nucleobase biosynthetic process"/>
    <property type="evidence" value="ECO:0007669"/>
    <property type="project" value="InterPro"/>
</dbReference>
<dbReference type="GO" id="GO:0044205">
    <property type="term" value="P:'de novo' UMP biosynthetic process"/>
    <property type="evidence" value="ECO:0007669"/>
    <property type="project" value="UniProtKB-UniRule"/>
</dbReference>
<dbReference type="GO" id="GO:0006520">
    <property type="term" value="P:amino acid metabolic process"/>
    <property type="evidence" value="ECO:0007669"/>
    <property type="project" value="InterPro"/>
</dbReference>
<dbReference type="FunFam" id="3.40.50.1370:FF:000007">
    <property type="entry name" value="Aspartate carbamoyltransferase"/>
    <property type="match status" value="1"/>
</dbReference>
<dbReference type="FunFam" id="3.40.50.1370:FF:000012">
    <property type="entry name" value="Aspartate carbamoyltransferase"/>
    <property type="match status" value="1"/>
</dbReference>
<dbReference type="Gene3D" id="3.40.50.1370">
    <property type="entry name" value="Aspartate/ornithine carbamoyltransferase"/>
    <property type="match status" value="2"/>
</dbReference>
<dbReference type="HAMAP" id="MF_00001">
    <property type="entry name" value="Asp_carb_tr"/>
    <property type="match status" value="1"/>
</dbReference>
<dbReference type="InterPro" id="IPR006132">
    <property type="entry name" value="Asp/Orn_carbamoyltranf_P-bd"/>
</dbReference>
<dbReference type="InterPro" id="IPR006130">
    <property type="entry name" value="Asp/Orn_carbamoylTrfase"/>
</dbReference>
<dbReference type="InterPro" id="IPR036901">
    <property type="entry name" value="Asp/Orn_carbamoylTrfase_sf"/>
</dbReference>
<dbReference type="InterPro" id="IPR002082">
    <property type="entry name" value="Asp_carbamoyltransf"/>
</dbReference>
<dbReference type="InterPro" id="IPR006131">
    <property type="entry name" value="Asp_carbamoyltransf_Asp/Orn-bd"/>
</dbReference>
<dbReference type="NCBIfam" id="TIGR00670">
    <property type="entry name" value="asp_carb_tr"/>
    <property type="match status" value="1"/>
</dbReference>
<dbReference type="NCBIfam" id="NF002032">
    <property type="entry name" value="PRK00856.1"/>
    <property type="match status" value="1"/>
</dbReference>
<dbReference type="PANTHER" id="PTHR45753:SF6">
    <property type="entry name" value="ASPARTATE CARBAMOYLTRANSFERASE"/>
    <property type="match status" value="1"/>
</dbReference>
<dbReference type="PANTHER" id="PTHR45753">
    <property type="entry name" value="ORNITHINE CARBAMOYLTRANSFERASE, MITOCHONDRIAL"/>
    <property type="match status" value="1"/>
</dbReference>
<dbReference type="Pfam" id="PF00185">
    <property type="entry name" value="OTCace"/>
    <property type="match status" value="1"/>
</dbReference>
<dbReference type="Pfam" id="PF02729">
    <property type="entry name" value="OTCace_N"/>
    <property type="match status" value="1"/>
</dbReference>
<dbReference type="PRINTS" id="PR00100">
    <property type="entry name" value="AOTCASE"/>
</dbReference>
<dbReference type="PRINTS" id="PR00101">
    <property type="entry name" value="ATCASE"/>
</dbReference>
<dbReference type="SUPFAM" id="SSF53671">
    <property type="entry name" value="Aspartate/ornithine carbamoyltransferase"/>
    <property type="match status" value="1"/>
</dbReference>
<dbReference type="PROSITE" id="PS00097">
    <property type="entry name" value="CARBAMOYLTRANSFERASE"/>
    <property type="match status" value="1"/>
</dbReference>
<protein>
    <recommendedName>
        <fullName evidence="1">Aspartate carbamoyltransferase catalytic subunit</fullName>
        <ecNumber evidence="1">2.1.3.2</ecNumber>
    </recommendedName>
    <alternativeName>
        <fullName evidence="1">Aspartate transcarbamylase</fullName>
        <shortName evidence="1">ATCase</shortName>
    </alternativeName>
</protein>
<proteinExistence type="inferred from homology"/>
<accession>A0JX76</accession>
<gene>
    <name evidence="1" type="primary">pyrB</name>
    <name type="ordered locus">Arth_2266</name>
</gene>
<keyword id="KW-0665">Pyrimidine biosynthesis</keyword>
<keyword id="KW-1185">Reference proteome</keyword>
<keyword id="KW-0808">Transferase</keyword>
<comment type="function">
    <text evidence="1">Catalyzes the condensation of carbamoyl phosphate and aspartate to form carbamoyl aspartate and inorganic phosphate, the committed step in the de novo pyrimidine nucleotide biosynthesis pathway.</text>
</comment>
<comment type="catalytic activity">
    <reaction evidence="1">
        <text>carbamoyl phosphate + L-aspartate = N-carbamoyl-L-aspartate + phosphate + H(+)</text>
        <dbReference type="Rhea" id="RHEA:20013"/>
        <dbReference type="ChEBI" id="CHEBI:15378"/>
        <dbReference type="ChEBI" id="CHEBI:29991"/>
        <dbReference type="ChEBI" id="CHEBI:32814"/>
        <dbReference type="ChEBI" id="CHEBI:43474"/>
        <dbReference type="ChEBI" id="CHEBI:58228"/>
        <dbReference type="EC" id="2.1.3.2"/>
    </reaction>
</comment>
<comment type="pathway">
    <text evidence="1">Pyrimidine metabolism; UMP biosynthesis via de novo pathway; (S)-dihydroorotate from bicarbonate: step 2/3.</text>
</comment>
<comment type="subunit">
    <text evidence="1">Heterododecamer (2C3:3R2) of six catalytic PyrB chains organized as two trimers (C3), and six regulatory PyrI chains organized as three dimers (R2).</text>
</comment>
<comment type="similarity">
    <text evidence="1">Belongs to the aspartate/ornithine carbamoyltransferase superfamily. ATCase family.</text>
</comment>
<feature type="chain" id="PRO_0000301552" description="Aspartate carbamoyltransferase catalytic subunit">
    <location>
        <begin position="1"/>
        <end position="337"/>
    </location>
</feature>
<feature type="binding site" evidence="1">
    <location>
        <position position="54"/>
    </location>
    <ligand>
        <name>carbamoyl phosphate</name>
        <dbReference type="ChEBI" id="CHEBI:58228"/>
    </ligand>
</feature>
<feature type="binding site" evidence="1">
    <location>
        <position position="55"/>
    </location>
    <ligand>
        <name>carbamoyl phosphate</name>
        <dbReference type="ChEBI" id="CHEBI:58228"/>
    </ligand>
</feature>
<feature type="binding site" evidence="1">
    <location>
        <position position="82"/>
    </location>
    <ligand>
        <name>L-aspartate</name>
        <dbReference type="ChEBI" id="CHEBI:29991"/>
    </ligand>
</feature>
<feature type="binding site" evidence="1">
    <location>
        <position position="104"/>
    </location>
    <ligand>
        <name>carbamoyl phosphate</name>
        <dbReference type="ChEBI" id="CHEBI:58228"/>
    </ligand>
</feature>
<feature type="binding site" evidence="1">
    <location>
        <position position="134"/>
    </location>
    <ligand>
        <name>carbamoyl phosphate</name>
        <dbReference type="ChEBI" id="CHEBI:58228"/>
    </ligand>
</feature>
<feature type="binding site" evidence="1">
    <location>
        <position position="137"/>
    </location>
    <ligand>
        <name>carbamoyl phosphate</name>
        <dbReference type="ChEBI" id="CHEBI:58228"/>
    </ligand>
</feature>
<feature type="binding site" evidence="1">
    <location>
        <position position="177"/>
    </location>
    <ligand>
        <name>L-aspartate</name>
        <dbReference type="ChEBI" id="CHEBI:29991"/>
    </ligand>
</feature>
<feature type="binding site" evidence="1">
    <location>
        <position position="232"/>
    </location>
    <ligand>
        <name>L-aspartate</name>
        <dbReference type="ChEBI" id="CHEBI:29991"/>
    </ligand>
</feature>
<feature type="binding site" evidence="1">
    <location>
        <position position="277"/>
    </location>
    <ligand>
        <name>carbamoyl phosphate</name>
        <dbReference type="ChEBI" id="CHEBI:58228"/>
    </ligand>
</feature>
<feature type="binding site" evidence="1">
    <location>
        <position position="278"/>
    </location>
    <ligand>
        <name>carbamoyl phosphate</name>
        <dbReference type="ChEBI" id="CHEBI:58228"/>
    </ligand>
</feature>